<reference key="1">
    <citation type="journal article" date="2011" name="J. Bacteriol.">
        <title>Complete genome sequence of the Thermophilic Bacterium Exiguobacterium sp. AT1b.</title>
        <authorList>
            <person name="Vishnivetskaya T.A."/>
            <person name="Lucas S."/>
            <person name="Copeland A."/>
            <person name="Lapidus A."/>
            <person name="Glavina del Rio T."/>
            <person name="Dalin E."/>
            <person name="Tice H."/>
            <person name="Bruce D.C."/>
            <person name="Goodwin L.A."/>
            <person name="Pitluck S."/>
            <person name="Saunders E."/>
            <person name="Brettin T."/>
            <person name="Detter C."/>
            <person name="Han C."/>
            <person name="Larimer F."/>
            <person name="Land M.L."/>
            <person name="Hauser L.J."/>
            <person name="Kyrpides N.C."/>
            <person name="Ovchinnikova G."/>
            <person name="Kathariou S."/>
            <person name="Ramaley R.F."/>
            <person name="Rodrigues D.F."/>
            <person name="Hendrix C."/>
            <person name="Richardson P."/>
            <person name="Tiedje J.M."/>
        </authorList>
    </citation>
    <scope>NUCLEOTIDE SEQUENCE [LARGE SCALE GENOMIC DNA]</scope>
    <source>
        <strain>ATCC BAA-1283 / AT1b</strain>
    </source>
</reference>
<proteinExistence type="inferred from homology"/>
<accession>C4L464</accession>
<sequence>MRCPKCDHNGTRVLDSRPVQDHYSIRRRRECEKCGYRFTTFETVEQTPLIIVKKDGNREEFSREKVLRGIIRACEKRPVTLEQLEGVVTKVEQQLRALAQSEIPSEQVGELVMNELARVDEVAYVRFASVYRQFKDITVFFKELEDLMKQENSTN</sequence>
<feature type="chain" id="PRO_1000206117" description="Transcriptional repressor NrdR">
    <location>
        <begin position="1"/>
        <end position="155"/>
    </location>
</feature>
<feature type="domain" description="ATP-cone" evidence="1">
    <location>
        <begin position="49"/>
        <end position="139"/>
    </location>
</feature>
<feature type="zinc finger region" evidence="1">
    <location>
        <begin position="3"/>
        <end position="34"/>
    </location>
</feature>
<comment type="function">
    <text evidence="1">Negatively regulates transcription of bacterial ribonucleotide reductase nrd genes and operons by binding to NrdR-boxes.</text>
</comment>
<comment type="cofactor">
    <cofactor evidence="1">
        <name>Zn(2+)</name>
        <dbReference type="ChEBI" id="CHEBI:29105"/>
    </cofactor>
    <text evidence="1">Binds 1 zinc ion.</text>
</comment>
<comment type="similarity">
    <text evidence="1">Belongs to the NrdR family.</text>
</comment>
<keyword id="KW-0067">ATP-binding</keyword>
<keyword id="KW-0238">DNA-binding</keyword>
<keyword id="KW-0479">Metal-binding</keyword>
<keyword id="KW-0547">Nucleotide-binding</keyword>
<keyword id="KW-0678">Repressor</keyword>
<keyword id="KW-0804">Transcription</keyword>
<keyword id="KW-0805">Transcription regulation</keyword>
<keyword id="KW-0862">Zinc</keyword>
<keyword id="KW-0863">Zinc-finger</keyword>
<protein>
    <recommendedName>
        <fullName evidence="1">Transcriptional repressor NrdR</fullName>
    </recommendedName>
</protein>
<dbReference type="EMBL" id="CP001615">
    <property type="protein sequence ID" value="ACQ69586.1"/>
    <property type="molecule type" value="Genomic_DNA"/>
</dbReference>
<dbReference type="RefSeq" id="WP_012726705.1">
    <property type="nucleotide sequence ID" value="NZ_MOEL01000008.1"/>
</dbReference>
<dbReference type="SMR" id="C4L464"/>
<dbReference type="STRING" id="360911.EAT1b_0655"/>
<dbReference type="GeneID" id="94371732"/>
<dbReference type="KEGG" id="eat:EAT1b_0655"/>
<dbReference type="eggNOG" id="COG1327">
    <property type="taxonomic scope" value="Bacteria"/>
</dbReference>
<dbReference type="HOGENOM" id="CLU_108412_0_0_9"/>
<dbReference type="OrthoDB" id="9807461at2"/>
<dbReference type="Proteomes" id="UP000000716">
    <property type="component" value="Chromosome"/>
</dbReference>
<dbReference type="GO" id="GO:0005524">
    <property type="term" value="F:ATP binding"/>
    <property type="evidence" value="ECO:0007669"/>
    <property type="project" value="UniProtKB-KW"/>
</dbReference>
<dbReference type="GO" id="GO:0003677">
    <property type="term" value="F:DNA binding"/>
    <property type="evidence" value="ECO:0007669"/>
    <property type="project" value="UniProtKB-KW"/>
</dbReference>
<dbReference type="GO" id="GO:0008270">
    <property type="term" value="F:zinc ion binding"/>
    <property type="evidence" value="ECO:0007669"/>
    <property type="project" value="UniProtKB-UniRule"/>
</dbReference>
<dbReference type="GO" id="GO:0045892">
    <property type="term" value="P:negative regulation of DNA-templated transcription"/>
    <property type="evidence" value="ECO:0007669"/>
    <property type="project" value="UniProtKB-UniRule"/>
</dbReference>
<dbReference type="HAMAP" id="MF_00440">
    <property type="entry name" value="NrdR"/>
    <property type="match status" value="1"/>
</dbReference>
<dbReference type="InterPro" id="IPR005144">
    <property type="entry name" value="ATP-cone_dom"/>
</dbReference>
<dbReference type="InterPro" id="IPR055173">
    <property type="entry name" value="NrdR-like_N"/>
</dbReference>
<dbReference type="InterPro" id="IPR003796">
    <property type="entry name" value="RNR_NrdR-like"/>
</dbReference>
<dbReference type="NCBIfam" id="TIGR00244">
    <property type="entry name" value="transcriptional regulator NrdR"/>
    <property type="match status" value="1"/>
</dbReference>
<dbReference type="PANTHER" id="PTHR30455">
    <property type="entry name" value="TRANSCRIPTIONAL REPRESSOR NRDR"/>
    <property type="match status" value="1"/>
</dbReference>
<dbReference type="PANTHER" id="PTHR30455:SF2">
    <property type="entry name" value="TRANSCRIPTIONAL REPRESSOR NRDR"/>
    <property type="match status" value="1"/>
</dbReference>
<dbReference type="Pfam" id="PF03477">
    <property type="entry name" value="ATP-cone"/>
    <property type="match status" value="1"/>
</dbReference>
<dbReference type="Pfam" id="PF22811">
    <property type="entry name" value="Zn_ribbon_NrdR"/>
    <property type="match status" value="1"/>
</dbReference>
<dbReference type="PROSITE" id="PS51161">
    <property type="entry name" value="ATP_CONE"/>
    <property type="match status" value="1"/>
</dbReference>
<name>NRDR_EXISA</name>
<evidence type="ECO:0000255" key="1">
    <source>
        <dbReference type="HAMAP-Rule" id="MF_00440"/>
    </source>
</evidence>
<gene>
    <name evidence="1" type="primary">nrdR</name>
    <name type="ordered locus">EAT1b_0655</name>
</gene>
<organism>
    <name type="scientific">Exiguobacterium sp. (strain ATCC BAA-1283 / AT1b)</name>
    <dbReference type="NCBI Taxonomy" id="360911"/>
    <lineage>
        <taxon>Bacteria</taxon>
        <taxon>Bacillati</taxon>
        <taxon>Bacillota</taxon>
        <taxon>Bacilli</taxon>
        <taxon>Bacillales</taxon>
        <taxon>Bacillales Family XII. Incertae Sedis</taxon>
        <taxon>Exiguobacterium</taxon>
    </lineage>
</organism>